<feature type="chain" id="PRO_0000081360" description="Transcriptional regulatory protein HprR">
    <location>
        <begin position="1"/>
        <end position="223"/>
    </location>
</feature>
<feature type="domain" description="Response regulatory" evidence="1">
    <location>
        <begin position="2"/>
        <end position="115"/>
    </location>
</feature>
<feature type="DNA-binding region" description="OmpR/PhoB-type" evidence="2">
    <location>
        <begin position="122"/>
        <end position="220"/>
    </location>
</feature>
<feature type="modified residue" description="4-aspartylphosphate" evidence="1">
    <location>
        <position position="51"/>
    </location>
</feature>
<keyword id="KW-0010">Activator</keyword>
<keyword id="KW-0963">Cytoplasm</keyword>
<keyword id="KW-0238">DNA-binding</keyword>
<keyword id="KW-0597">Phosphoprotein</keyword>
<keyword id="KW-1185">Reference proteome</keyword>
<keyword id="KW-0678">Repressor</keyword>
<keyword id="KW-0804">Transcription</keyword>
<keyword id="KW-0805">Transcription regulation</keyword>
<keyword id="KW-0902">Two-component regulatory system</keyword>
<protein>
    <recommendedName>
        <fullName evidence="7">Transcriptional regulatory protein HprR</fullName>
    </recommendedName>
    <alternativeName>
        <fullName evidence="6">Hydrogen peroxide response regulator</fullName>
    </alternativeName>
</protein>
<evidence type="ECO:0000255" key="1">
    <source>
        <dbReference type="PROSITE-ProRule" id="PRU00169"/>
    </source>
</evidence>
<evidence type="ECO:0000255" key="2">
    <source>
        <dbReference type="PROSITE-ProRule" id="PRU01091"/>
    </source>
</evidence>
<evidence type="ECO:0000269" key="3">
    <source>
    </source>
</evidence>
<evidence type="ECO:0000269" key="4">
    <source>
    </source>
</evidence>
<evidence type="ECO:0000269" key="5">
    <source>
    </source>
</evidence>
<evidence type="ECO:0000303" key="6">
    <source>
    </source>
</evidence>
<evidence type="ECO:0000305" key="7"/>
<reference key="1">
    <citation type="journal article" date="1996" name="DNA Res.">
        <title>A 460-kb DNA sequence of the Escherichia coli K-12 genome corresponding to the 40.1-50.0 min region on the linkage map.</title>
        <authorList>
            <person name="Itoh T."/>
            <person name="Aiba H."/>
            <person name="Baba T."/>
            <person name="Fujita K."/>
            <person name="Hayashi K."/>
            <person name="Inada T."/>
            <person name="Isono K."/>
            <person name="Kasai H."/>
            <person name="Kimura S."/>
            <person name="Kitakawa M."/>
            <person name="Kitagawa M."/>
            <person name="Makino K."/>
            <person name="Miki T."/>
            <person name="Mizobuchi K."/>
            <person name="Mori H."/>
            <person name="Mori T."/>
            <person name="Motomura K."/>
            <person name="Nakade S."/>
            <person name="Nakamura Y."/>
            <person name="Nashimoto H."/>
            <person name="Nishio Y."/>
            <person name="Oshima T."/>
            <person name="Saito N."/>
            <person name="Sampei G."/>
            <person name="Seki Y."/>
            <person name="Sivasundaram S."/>
            <person name="Tagami H."/>
            <person name="Takeda J."/>
            <person name="Takemoto K."/>
            <person name="Wada C."/>
            <person name="Yamamoto Y."/>
            <person name="Horiuchi T."/>
        </authorList>
    </citation>
    <scope>NUCLEOTIDE SEQUENCE [LARGE SCALE GENOMIC DNA]</scope>
    <source>
        <strain>K12 / W3110 / ATCC 27325 / DSM 5911</strain>
    </source>
</reference>
<reference key="2">
    <citation type="journal article" date="1997" name="Science">
        <title>The complete genome sequence of Escherichia coli K-12.</title>
        <authorList>
            <person name="Blattner F.R."/>
            <person name="Plunkett G. III"/>
            <person name="Bloch C.A."/>
            <person name="Perna N.T."/>
            <person name="Burland V."/>
            <person name="Riley M."/>
            <person name="Collado-Vides J."/>
            <person name="Glasner J.D."/>
            <person name="Rode C.K."/>
            <person name="Mayhew G.F."/>
            <person name="Gregor J."/>
            <person name="Davis N.W."/>
            <person name="Kirkpatrick H.A."/>
            <person name="Goeden M.A."/>
            <person name="Rose D.J."/>
            <person name="Mau B."/>
            <person name="Shao Y."/>
        </authorList>
    </citation>
    <scope>NUCLEOTIDE SEQUENCE [LARGE SCALE GENOMIC DNA]</scope>
    <source>
        <strain>K12 / MG1655 / ATCC 47076</strain>
    </source>
</reference>
<reference key="3">
    <citation type="journal article" date="2006" name="Mol. Syst. Biol.">
        <title>Highly accurate genome sequences of Escherichia coli K-12 strains MG1655 and W3110.</title>
        <authorList>
            <person name="Hayashi K."/>
            <person name="Morooka N."/>
            <person name="Yamamoto Y."/>
            <person name="Fujita K."/>
            <person name="Isono K."/>
            <person name="Choi S."/>
            <person name="Ohtsubo E."/>
            <person name="Baba T."/>
            <person name="Wanner B.L."/>
            <person name="Mori H."/>
            <person name="Horiuchi T."/>
        </authorList>
    </citation>
    <scope>NUCLEOTIDE SEQUENCE [LARGE SCALE GENOMIC DNA]</scope>
    <source>
        <strain>K12 / W3110 / ATCC 27325 / DSM 5911</strain>
    </source>
</reference>
<reference key="4">
    <citation type="journal article" date="2005" name="J. Biol. Chem.">
        <title>Functional characterization in vitro of all two-component signal transduction systems from Escherichia coli.</title>
        <authorList>
            <person name="Yamamoto K."/>
            <person name="Hirao K."/>
            <person name="Oshima T."/>
            <person name="Aiba H."/>
            <person name="Utsumi R."/>
            <person name="Ishihama A."/>
        </authorList>
    </citation>
    <scope>PHOSPHORYLATION</scope>
    <source>
        <strain>K12 / W3110 / ATCC 27325 / DSM 5911</strain>
    </source>
</reference>
<reference key="5">
    <citation type="journal article" date="2015" name="Microbiology">
        <title>Cooperative regulation of the common target genes between H(2)O(2)-sensing YedVW and Cu2+-sensing CusSR in Escherichia coli.</title>
        <authorList>
            <person name="Urano H."/>
            <person name="Umezawa Y."/>
            <person name="Yamamoto K."/>
            <person name="Ishihama A."/>
            <person name="Ogasawara H."/>
        </authorList>
    </citation>
    <scope>FUNCTION</scope>
    <scope>DNA-BINDING</scope>
    <scope>INTERPLAY BETWEEN HPRSR AND CUSSR</scope>
</reference>
<reference key="6">
    <citation type="journal article" date="2017" name="Microbiology">
        <title>Cross-regulation between two common ancestral response regulators, HprR and CusR, in Escherichia coli.</title>
        <authorList>
            <person name="Urano H."/>
            <person name="Yoshida M."/>
            <person name="Ogawa A."/>
            <person name="Yamamoto K."/>
            <person name="Ishihama A."/>
            <person name="Ogasawara H."/>
        </authorList>
    </citation>
    <scope>FUNCTION</scope>
    <scope>DNA-BINDING</scope>
    <scope>INTERPLAY BETWEEN HPRSR AND CUSSR</scope>
</reference>
<dbReference type="EMBL" id="U00096">
    <property type="protein sequence ID" value="AAC75035.2"/>
    <property type="molecule type" value="Genomic_DNA"/>
</dbReference>
<dbReference type="EMBL" id="AP009048">
    <property type="protein sequence ID" value="BAA15796.2"/>
    <property type="molecule type" value="Genomic_DNA"/>
</dbReference>
<dbReference type="PIR" id="E64961">
    <property type="entry name" value="E64961"/>
</dbReference>
<dbReference type="RefSeq" id="NP_416478.2">
    <property type="nucleotide sequence ID" value="NC_000913.3"/>
</dbReference>
<dbReference type="RefSeq" id="WP_001395354.1">
    <property type="nucleotide sequence ID" value="NZ_LN832404.1"/>
</dbReference>
<dbReference type="SMR" id="P76340"/>
<dbReference type="BioGRID" id="4260386">
    <property type="interactions" value="43"/>
</dbReference>
<dbReference type="BioGRID" id="850837">
    <property type="interactions" value="1"/>
</dbReference>
<dbReference type="DIP" id="DIP-11853N"/>
<dbReference type="FunCoup" id="P76340">
    <property type="interactions" value="364"/>
</dbReference>
<dbReference type="IntAct" id="P76340">
    <property type="interactions" value="2"/>
</dbReference>
<dbReference type="STRING" id="511145.b1969"/>
<dbReference type="iPTMnet" id="P76340"/>
<dbReference type="jPOST" id="P76340"/>
<dbReference type="PaxDb" id="511145-b1969"/>
<dbReference type="EnsemblBacteria" id="AAC75035">
    <property type="protein sequence ID" value="AAC75035"/>
    <property type="gene ID" value="b1969"/>
</dbReference>
<dbReference type="GeneID" id="946486"/>
<dbReference type="KEGG" id="ecj:JW5322"/>
<dbReference type="KEGG" id="eco:b1969"/>
<dbReference type="KEGG" id="ecoc:C3026_11125"/>
<dbReference type="PATRIC" id="fig|511145.12.peg.2049"/>
<dbReference type="EchoBASE" id="EB3798"/>
<dbReference type="eggNOG" id="COG0745">
    <property type="taxonomic scope" value="Bacteria"/>
</dbReference>
<dbReference type="HOGENOM" id="CLU_000445_30_1_6"/>
<dbReference type="InParanoid" id="P76340"/>
<dbReference type="OMA" id="LAEVWDW"/>
<dbReference type="OrthoDB" id="9802426at2"/>
<dbReference type="PhylomeDB" id="P76340"/>
<dbReference type="BioCyc" id="EcoCyc:G7057-MONOMER"/>
<dbReference type="PRO" id="PR:P76340"/>
<dbReference type="Proteomes" id="UP000000625">
    <property type="component" value="Chromosome"/>
</dbReference>
<dbReference type="GO" id="GO:0005829">
    <property type="term" value="C:cytosol"/>
    <property type="evidence" value="ECO:0000318"/>
    <property type="project" value="GO_Central"/>
</dbReference>
<dbReference type="GO" id="GO:0032993">
    <property type="term" value="C:protein-DNA complex"/>
    <property type="evidence" value="ECO:0000318"/>
    <property type="project" value="GO_Central"/>
</dbReference>
<dbReference type="GO" id="GO:0003677">
    <property type="term" value="F:DNA binding"/>
    <property type="evidence" value="ECO:0000314"/>
    <property type="project" value="EcoCyc"/>
</dbReference>
<dbReference type="GO" id="GO:0003700">
    <property type="term" value="F:DNA-binding transcription factor activity"/>
    <property type="evidence" value="ECO:0000314"/>
    <property type="project" value="EcoCyc"/>
</dbReference>
<dbReference type="GO" id="GO:0000156">
    <property type="term" value="F:phosphorelay response regulator activity"/>
    <property type="evidence" value="ECO:0000318"/>
    <property type="project" value="GO_Central"/>
</dbReference>
<dbReference type="GO" id="GO:0000976">
    <property type="term" value="F:transcription cis-regulatory region binding"/>
    <property type="evidence" value="ECO:0000318"/>
    <property type="project" value="GO_Central"/>
</dbReference>
<dbReference type="GO" id="GO:0045892">
    <property type="term" value="P:negative regulation of DNA-templated transcription"/>
    <property type="evidence" value="ECO:0000314"/>
    <property type="project" value="EcoCyc"/>
</dbReference>
<dbReference type="GO" id="GO:0045893">
    <property type="term" value="P:positive regulation of DNA-templated transcription"/>
    <property type="evidence" value="ECO:0000314"/>
    <property type="project" value="EcoCyc"/>
</dbReference>
<dbReference type="GO" id="GO:0006355">
    <property type="term" value="P:regulation of DNA-templated transcription"/>
    <property type="evidence" value="ECO:0000318"/>
    <property type="project" value="GO_Central"/>
</dbReference>
<dbReference type="CDD" id="cd19935">
    <property type="entry name" value="REC_OmpR_CusR-like"/>
    <property type="match status" value="1"/>
</dbReference>
<dbReference type="CDD" id="cd00383">
    <property type="entry name" value="trans_reg_C"/>
    <property type="match status" value="1"/>
</dbReference>
<dbReference type="FunFam" id="3.40.50.2300:FF:000001">
    <property type="entry name" value="DNA-binding response regulator PhoB"/>
    <property type="match status" value="1"/>
</dbReference>
<dbReference type="FunFam" id="1.10.10.10:FF:000005">
    <property type="entry name" value="Two-component system response regulator"/>
    <property type="match status" value="1"/>
</dbReference>
<dbReference type="Gene3D" id="3.40.50.2300">
    <property type="match status" value="1"/>
</dbReference>
<dbReference type="Gene3D" id="6.10.250.690">
    <property type="match status" value="1"/>
</dbReference>
<dbReference type="Gene3D" id="1.10.10.10">
    <property type="entry name" value="Winged helix-like DNA-binding domain superfamily/Winged helix DNA-binding domain"/>
    <property type="match status" value="1"/>
</dbReference>
<dbReference type="InterPro" id="IPR011006">
    <property type="entry name" value="CheY-like_superfamily"/>
</dbReference>
<dbReference type="InterPro" id="IPR006291">
    <property type="entry name" value="CusR-like"/>
</dbReference>
<dbReference type="InterPro" id="IPR001867">
    <property type="entry name" value="OmpR/PhoB-type_DNA-bd"/>
</dbReference>
<dbReference type="InterPro" id="IPR016032">
    <property type="entry name" value="Sig_transdc_resp-reg_C-effctor"/>
</dbReference>
<dbReference type="InterPro" id="IPR001789">
    <property type="entry name" value="Sig_transdc_resp-reg_receiver"/>
</dbReference>
<dbReference type="InterPro" id="IPR039420">
    <property type="entry name" value="WalR-like"/>
</dbReference>
<dbReference type="InterPro" id="IPR036388">
    <property type="entry name" value="WH-like_DNA-bd_sf"/>
</dbReference>
<dbReference type="NCBIfam" id="TIGR01387">
    <property type="entry name" value="cztR_silR_copR"/>
    <property type="match status" value="1"/>
</dbReference>
<dbReference type="NCBIfam" id="NF008567">
    <property type="entry name" value="PRK11517.1"/>
    <property type="match status" value="1"/>
</dbReference>
<dbReference type="PANTHER" id="PTHR48111">
    <property type="entry name" value="REGULATOR OF RPOS"/>
    <property type="match status" value="1"/>
</dbReference>
<dbReference type="PANTHER" id="PTHR48111:SF41">
    <property type="entry name" value="TRANSCRIPTIONAL REGULATORY PROTEIN CUSR-RELATED"/>
    <property type="match status" value="1"/>
</dbReference>
<dbReference type="Pfam" id="PF00072">
    <property type="entry name" value="Response_reg"/>
    <property type="match status" value="1"/>
</dbReference>
<dbReference type="Pfam" id="PF00486">
    <property type="entry name" value="Trans_reg_C"/>
    <property type="match status" value="1"/>
</dbReference>
<dbReference type="SMART" id="SM00448">
    <property type="entry name" value="REC"/>
    <property type="match status" value="1"/>
</dbReference>
<dbReference type="SMART" id="SM00862">
    <property type="entry name" value="Trans_reg_C"/>
    <property type="match status" value="1"/>
</dbReference>
<dbReference type="SUPFAM" id="SSF46894">
    <property type="entry name" value="C-terminal effector domain of the bipartite response regulators"/>
    <property type="match status" value="1"/>
</dbReference>
<dbReference type="SUPFAM" id="SSF52172">
    <property type="entry name" value="CheY-like"/>
    <property type="match status" value="1"/>
</dbReference>
<dbReference type="PROSITE" id="PS51755">
    <property type="entry name" value="OMPR_PHOB"/>
    <property type="match status" value="1"/>
</dbReference>
<dbReference type="PROSITE" id="PS50110">
    <property type="entry name" value="RESPONSE_REGULATORY"/>
    <property type="match status" value="1"/>
</dbReference>
<name>HPRR_ECOLI</name>
<gene>
    <name evidence="6" type="primary">hprR</name>
    <name type="synonym">yedW</name>
    <name type="ordered locus">b1969</name>
    <name type="ordered locus">JW5322</name>
</gene>
<organism>
    <name type="scientific">Escherichia coli (strain K12)</name>
    <dbReference type="NCBI Taxonomy" id="83333"/>
    <lineage>
        <taxon>Bacteria</taxon>
        <taxon>Pseudomonadati</taxon>
        <taxon>Pseudomonadota</taxon>
        <taxon>Gammaproteobacteria</taxon>
        <taxon>Enterobacterales</taxon>
        <taxon>Enterobacteriaceae</taxon>
        <taxon>Escherichia</taxon>
    </lineage>
</organism>
<comment type="function">
    <text evidence="4 5">Member of a two-component regulatory system HprR/HprS involved in response to hydrogen peroxide (PubMed:25568260, PubMed:27983483). Regulates the expression of at least 5 operons, cyoABCDE, hprRS, hiuH, cusRS and cusCFBA. Bifunctional regulator that acts as an activator and a repressor (PubMed:25568260).</text>
</comment>
<comment type="interaction">
    <interactant intactId="EBI-560799">
        <id>P76340</id>
    </interactant>
    <interactant intactId="EBI-544837">
        <id>P76092</id>
        <label>ynbC</label>
    </interactant>
    <organismsDiffer>false</organismsDiffer>
    <experiments>2</experiments>
</comment>
<comment type="subcellular location">
    <subcellularLocation>
        <location evidence="7">Cytoplasm</location>
    </subcellularLocation>
</comment>
<comment type="PTM">
    <text evidence="3">Phosphorylated by HprS.</text>
</comment>
<comment type="miscellaneous">
    <text evidence="4 5">HprSR and CusSR form a unique regulation system, where both two-component systems recognize and regulate the same set of genes, but under different environmental conditions. HprSR plays a role in H(2)O(2) response regulation, while CusSR plays a role in Cu(2+) response regulation (PubMed:25568260, PubMed:27983483). Under low protein concentrations, the two regulators recognize and transcribe both hiuH and cusC promoters, albeit at different efficiency, apparently in a collaborative fashion (PubMed:27983483).</text>
</comment>
<sequence>MKILLIEDNQRTQEWVTQGLSEAGYVIDAVSDGRDGLYLALKDDYALIILDIMLPGMDGWQILQTLRTAKQTPVICLTARDSVDDRVRGLDSGANDYLVKPFSFSELLARVRAQLRQHHALNSTLEISGLRMDSVSHSVSRDNISITLTRKEFQLLWLLASRAGEIIPRTVIASEIWGINFDSDTNTVDVAIRRLRAKVDDPFPEKLIATIRGMGYSFVAVKK</sequence>
<accession>P76340</accession>
<accession>P97172</accession>
<proteinExistence type="evidence at protein level"/>